<name>MED14_SCHPO</name>
<feature type="chain" id="PRO_0000096361" description="Mediator of RNA polymerase II transcription subunit 14">
    <location>
        <begin position="1"/>
        <end position="879"/>
    </location>
</feature>
<feature type="strand" evidence="4">
    <location>
        <begin position="11"/>
        <end position="15"/>
    </location>
</feature>
<feature type="helix" evidence="4">
    <location>
        <begin position="16"/>
        <end position="37"/>
    </location>
</feature>
<feature type="turn" evidence="4">
    <location>
        <begin position="38"/>
        <end position="40"/>
    </location>
</feature>
<feature type="helix" evidence="4">
    <location>
        <begin position="43"/>
        <end position="70"/>
    </location>
</feature>
<feature type="helix" evidence="4">
    <location>
        <begin position="71"/>
        <end position="73"/>
    </location>
</feature>
<feature type="helix" evidence="4">
    <location>
        <begin position="74"/>
        <end position="111"/>
    </location>
</feature>
<feature type="helix" evidence="4">
    <location>
        <begin position="118"/>
        <end position="125"/>
    </location>
</feature>
<feature type="helix" evidence="4">
    <location>
        <begin position="130"/>
        <end position="135"/>
    </location>
</feature>
<feature type="helix" evidence="4">
    <location>
        <begin position="137"/>
        <end position="142"/>
    </location>
</feature>
<feature type="helix" evidence="4">
    <location>
        <begin position="151"/>
        <end position="171"/>
    </location>
</feature>
<feature type="helix" evidence="4">
    <location>
        <begin position="177"/>
        <end position="179"/>
    </location>
</feature>
<feature type="strand" evidence="4">
    <location>
        <begin position="181"/>
        <end position="184"/>
    </location>
</feature>
<feature type="strand" evidence="4">
    <location>
        <begin position="186"/>
        <end position="193"/>
    </location>
</feature>
<feature type="strand" evidence="4">
    <location>
        <begin position="197"/>
        <end position="199"/>
    </location>
</feature>
<feature type="strand" evidence="4">
    <location>
        <begin position="201"/>
        <end position="205"/>
    </location>
</feature>
<feature type="helix" evidence="4">
    <location>
        <begin position="212"/>
        <end position="218"/>
    </location>
</feature>
<feature type="turn" evidence="4">
    <location>
        <begin position="219"/>
        <end position="221"/>
    </location>
</feature>
<feature type="strand" evidence="4">
    <location>
        <begin position="227"/>
        <end position="230"/>
    </location>
</feature>
<feature type="helix" evidence="4">
    <location>
        <begin position="235"/>
        <end position="254"/>
    </location>
</feature>
<feature type="helix" evidence="4">
    <location>
        <begin position="258"/>
        <end position="287"/>
    </location>
</feature>
<feature type="helix" evidence="4">
    <location>
        <begin position="291"/>
        <end position="293"/>
    </location>
</feature>
<feature type="strand" evidence="4">
    <location>
        <begin position="294"/>
        <end position="299"/>
    </location>
</feature>
<feature type="turn" evidence="4">
    <location>
        <begin position="300"/>
        <end position="303"/>
    </location>
</feature>
<feature type="strand" evidence="4">
    <location>
        <begin position="304"/>
        <end position="309"/>
    </location>
</feature>
<feature type="strand" evidence="4">
    <location>
        <begin position="327"/>
        <end position="334"/>
    </location>
</feature>
<feature type="helix" evidence="4">
    <location>
        <begin position="339"/>
        <end position="344"/>
    </location>
</feature>
<feature type="strand" evidence="4">
    <location>
        <begin position="356"/>
        <end position="364"/>
    </location>
</feature>
<feature type="strand" evidence="4">
    <location>
        <begin position="367"/>
        <end position="371"/>
    </location>
</feature>
<feature type="helix" evidence="4">
    <location>
        <begin position="379"/>
        <end position="401"/>
    </location>
</feature>
<feature type="strand" evidence="4">
    <location>
        <begin position="408"/>
        <end position="411"/>
    </location>
</feature>
<feature type="strand" evidence="4">
    <location>
        <begin position="414"/>
        <end position="419"/>
    </location>
</feature>
<feature type="strand" evidence="4">
    <location>
        <begin position="422"/>
        <end position="428"/>
    </location>
</feature>
<feature type="turn" evidence="4">
    <location>
        <begin position="430"/>
        <end position="432"/>
    </location>
</feature>
<feature type="strand" evidence="4">
    <location>
        <begin position="435"/>
        <end position="445"/>
    </location>
</feature>
<feature type="helix" evidence="4">
    <location>
        <begin position="448"/>
        <end position="458"/>
    </location>
</feature>
<feature type="helix" evidence="4">
    <location>
        <begin position="464"/>
        <end position="485"/>
    </location>
</feature>
<feature type="turn" evidence="4">
    <location>
        <begin position="486"/>
        <end position="488"/>
    </location>
</feature>
<feature type="strand" evidence="4">
    <location>
        <begin position="490"/>
        <end position="492"/>
    </location>
</feature>
<feature type="strand" evidence="4">
    <location>
        <begin position="500"/>
        <end position="504"/>
    </location>
</feature>
<feature type="helix" evidence="4">
    <location>
        <begin position="506"/>
        <end position="508"/>
    </location>
</feature>
<feature type="helix" evidence="4">
    <location>
        <begin position="511"/>
        <end position="513"/>
    </location>
</feature>
<feature type="strand" evidence="4">
    <location>
        <begin position="515"/>
        <end position="521"/>
    </location>
</feature>
<feature type="turn" evidence="4">
    <location>
        <begin position="522"/>
        <end position="525"/>
    </location>
</feature>
<feature type="strand" evidence="4">
    <location>
        <begin position="526"/>
        <end position="532"/>
    </location>
</feature>
<feature type="strand" evidence="4">
    <location>
        <begin position="534"/>
        <end position="536"/>
    </location>
</feature>
<feature type="strand" evidence="4">
    <location>
        <begin position="538"/>
        <end position="544"/>
    </location>
</feature>
<feature type="helix" evidence="4">
    <location>
        <begin position="553"/>
        <end position="575"/>
    </location>
</feature>
<protein>
    <recommendedName>
        <fullName>Mediator of RNA polymerase II transcription subunit 14</fullName>
    </recommendedName>
    <alternativeName>
        <fullName>Mediator complex subunit 14</fullName>
    </alternativeName>
    <alternativeName>
        <fullName>Mediator of RNA polymerase II complex subunit pmc1</fullName>
    </alternativeName>
</protein>
<accession>Q9P7Y4</accession>
<accession>O74344</accession>
<dbReference type="EMBL" id="CU329671">
    <property type="protein sequence ID" value="CAA20115.2"/>
    <property type="molecule type" value="Genomic_DNA"/>
</dbReference>
<dbReference type="PIR" id="T39859">
    <property type="entry name" value="T50388"/>
</dbReference>
<dbReference type="RefSeq" id="NP_595813.2">
    <property type="nucleotide sequence ID" value="NM_001021716.3"/>
</dbReference>
<dbReference type="PDB" id="5N9J">
    <property type="method" value="X-ray"/>
    <property type="resolution" value="3.40 A"/>
    <property type="chains" value="A=2-580"/>
</dbReference>
<dbReference type="PDB" id="5U0P">
    <property type="method" value="EM"/>
    <property type="resolution" value="4.40 A"/>
    <property type="chains" value="N=1-879"/>
</dbReference>
<dbReference type="PDB" id="5U0S">
    <property type="method" value="EM"/>
    <property type="resolution" value="7.80 A"/>
    <property type="chains" value="N=1-879"/>
</dbReference>
<dbReference type="PDBsum" id="5N9J"/>
<dbReference type="PDBsum" id="5U0P"/>
<dbReference type="PDBsum" id="5U0S"/>
<dbReference type="EMDB" id="EMD-8479"/>
<dbReference type="EMDB" id="EMD-8480"/>
<dbReference type="SMR" id="Q9P7Y4"/>
<dbReference type="BioGRID" id="277203">
    <property type="interactions" value="71"/>
</dbReference>
<dbReference type="FunCoup" id="Q9P7Y4">
    <property type="interactions" value="35"/>
</dbReference>
<dbReference type="IntAct" id="Q9P7Y4">
    <property type="interactions" value="1"/>
</dbReference>
<dbReference type="STRING" id="284812.Q9P7Y4"/>
<dbReference type="iPTMnet" id="Q9P7Y4"/>
<dbReference type="PaxDb" id="4896-SPBC1A4.10c.1"/>
<dbReference type="EnsemblFungi" id="SPBC1A4.10c.1">
    <property type="protein sequence ID" value="SPBC1A4.10c.1:pep"/>
    <property type="gene ID" value="SPBC1A4.10c"/>
</dbReference>
<dbReference type="GeneID" id="2540678"/>
<dbReference type="KEGG" id="spo:2540678"/>
<dbReference type="PomBase" id="SPBC1A4.10c">
    <property type="gene designation" value="med14"/>
</dbReference>
<dbReference type="VEuPathDB" id="FungiDB:SPBC1A4.10c"/>
<dbReference type="eggNOG" id="KOG1875">
    <property type="taxonomic scope" value="Eukaryota"/>
</dbReference>
<dbReference type="HOGENOM" id="CLU_327363_0_0_1"/>
<dbReference type="InParanoid" id="Q9P7Y4"/>
<dbReference type="OMA" id="LQGQKFC"/>
<dbReference type="PRO" id="PR:Q9P7Y4"/>
<dbReference type="Proteomes" id="UP000002485">
    <property type="component" value="Chromosome II"/>
</dbReference>
<dbReference type="GO" id="GO:0070847">
    <property type="term" value="C:core mediator complex"/>
    <property type="evidence" value="ECO:0000318"/>
    <property type="project" value="GO_Central"/>
</dbReference>
<dbReference type="GO" id="GO:0016592">
    <property type="term" value="C:mediator complex"/>
    <property type="evidence" value="ECO:0000314"/>
    <property type="project" value="PomBase"/>
</dbReference>
<dbReference type="GO" id="GO:0005634">
    <property type="term" value="C:nucleus"/>
    <property type="evidence" value="ECO:0007005"/>
    <property type="project" value="PomBase"/>
</dbReference>
<dbReference type="GO" id="GO:0003713">
    <property type="term" value="F:transcription coactivator activity"/>
    <property type="evidence" value="ECO:0000269"/>
    <property type="project" value="PomBase"/>
</dbReference>
<dbReference type="GO" id="GO:0003712">
    <property type="term" value="F:transcription coregulator activity"/>
    <property type="evidence" value="ECO:0000318"/>
    <property type="project" value="GO_Central"/>
</dbReference>
<dbReference type="GO" id="GO:0060261">
    <property type="term" value="P:positive regulation of transcription initiation by RNA polymerase II"/>
    <property type="evidence" value="ECO:0000269"/>
    <property type="project" value="PomBase"/>
</dbReference>
<dbReference type="GO" id="GO:0006357">
    <property type="term" value="P:regulation of transcription by RNA polymerase II"/>
    <property type="evidence" value="ECO:0000318"/>
    <property type="project" value="GO_Central"/>
</dbReference>
<dbReference type="GO" id="GO:0006367">
    <property type="term" value="P:transcription initiation at RNA polymerase II promoter"/>
    <property type="evidence" value="ECO:0000314"/>
    <property type="project" value="PomBase"/>
</dbReference>
<dbReference type="InterPro" id="IPR055122">
    <property type="entry name" value="Med14_N"/>
</dbReference>
<dbReference type="InterPro" id="IPR013947">
    <property type="entry name" value="Mediator_Med14"/>
</dbReference>
<dbReference type="PANTHER" id="PTHR12809">
    <property type="entry name" value="MEDIATOR COMPLEX SUBUNIT"/>
    <property type="match status" value="1"/>
</dbReference>
<dbReference type="PANTHER" id="PTHR12809:SF2">
    <property type="entry name" value="MEDIATOR OF RNA POLYMERASE II TRANSCRIPTION SUBUNIT 14"/>
    <property type="match status" value="1"/>
</dbReference>
<dbReference type="Pfam" id="PF08638">
    <property type="entry name" value="Med14"/>
    <property type="match status" value="1"/>
</dbReference>
<comment type="function">
    <text>Component of the Mediator complex, a coactivator involved in the regulated transcription of nearly all RNA polymerase II-dependent genes. Mediator functions as a bridge to convey information from gene-specific regulatory proteins to the basal RNA polymerase II transcription machinery. Mediator is recruited to promoters by direct interactions with regulatory proteins and serves as a scaffold for the assembly of a functional preinitiation complex with RNA polymerase II and the general transcription factors.</text>
</comment>
<comment type="subunit">
    <text evidence="2">Component of the Mediator complex.</text>
</comment>
<comment type="subcellular location">
    <subcellularLocation>
        <location evidence="1">Nucleus</location>
    </subcellularLocation>
</comment>
<comment type="similarity">
    <text evidence="3">Belongs to the Mediator complex subunit 14 family.</text>
</comment>
<keyword id="KW-0002">3D-structure</keyword>
<keyword id="KW-0010">Activator</keyword>
<keyword id="KW-0539">Nucleus</keyword>
<keyword id="KW-1185">Reference proteome</keyword>
<keyword id="KW-0804">Transcription</keyword>
<keyword id="KW-0805">Transcription regulation</keyword>
<gene>
    <name type="primary">med14</name>
    <name type="synonym">pmc1</name>
    <name type="ORF">SPBC1A4.10c</name>
    <name type="ORF">SPBP23A10.01c</name>
</gene>
<reference key="1">
    <citation type="journal article" date="2002" name="Nature">
        <title>The genome sequence of Schizosaccharomyces pombe.</title>
        <authorList>
            <person name="Wood V."/>
            <person name="Gwilliam R."/>
            <person name="Rajandream M.A."/>
            <person name="Lyne M.H."/>
            <person name="Lyne R."/>
            <person name="Stewart A."/>
            <person name="Sgouros J.G."/>
            <person name="Peat N."/>
            <person name="Hayles J."/>
            <person name="Baker S.G."/>
            <person name="Basham D."/>
            <person name="Bowman S."/>
            <person name="Brooks K."/>
            <person name="Brown D."/>
            <person name="Brown S."/>
            <person name="Chillingworth T."/>
            <person name="Churcher C.M."/>
            <person name="Collins M."/>
            <person name="Connor R."/>
            <person name="Cronin A."/>
            <person name="Davis P."/>
            <person name="Feltwell T."/>
            <person name="Fraser A."/>
            <person name="Gentles S."/>
            <person name="Goble A."/>
            <person name="Hamlin N."/>
            <person name="Harris D.E."/>
            <person name="Hidalgo J."/>
            <person name="Hodgson G."/>
            <person name="Holroyd S."/>
            <person name="Hornsby T."/>
            <person name="Howarth S."/>
            <person name="Huckle E.J."/>
            <person name="Hunt S."/>
            <person name="Jagels K."/>
            <person name="James K.D."/>
            <person name="Jones L."/>
            <person name="Jones M."/>
            <person name="Leather S."/>
            <person name="McDonald S."/>
            <person name="McLean J."/>
            <person name="Mooney P."/>
            <person name="Moule S."/>
            <person name="Mungall K.L."/>
            <person name="Murphy L.D."/>
            <person name="Niblett D."/>
            <person name="Odell C."/>
            <person name="Oliver K."/>
            <person name="O'Neil S."/>
            <person name="Pearson D."/>
            <person name="Quail M.A."/>
            <person name="Rabbinowitsch E."/>
            <person name="Rutherford K.M."/>
            <person name="Rutter S."/>
            <person name="Saunders D."/>
            <person name="Seeger K."/>
            <person name="Sharp S."/>
            <person name="Skelton J."/>
            <person name="Simmonds M.N."/>
            <person name="Squares R."/>
            <person name="Squares S."/>
            <person name="Stevens K."/>
            <person name="Taylor K."/>
            <person name="Taylor R.G."/>
            <person name="Tivey A."/>
            <person name="Walsh S.V."/>
            <person name="Warren T."/>
            <person name="Whitehead S."/>
            <person name="Woodward J.R."/>
            <person name="Volckaert G."/>
            <person name="Aert R."/>
            <person name="Robben J."/>
            <person name="Grymonprez B."/>
            <person name="Weltjens I."/>
            <person name="Vanstreels E."/>
            <person name="Rieger M."/>
            <person name="Schaefer M."/>
            <person name="Mueller-Auer S."/>
            <person name="Gabel C."/>
            <person name="Fuchs M."/>
            <person name="Duesterhoeft A."/>
            <person name="Fritzc C."/>
            <person name="Holzer E."/>
            <person name="Moestl D."/>
            <person name="Hilbert H."/>
            <person name="Borzym K."/>
            <person name="Langer I."/>
            <person name="Beck A."/>
            <person name="Lehrach H."/>
            <person name="Reinhardt R."/>
            <person name="Pohl T.M."/>
            <person name="Eger P."/>
            <person name="Zimmermann W."/>
            <person name="Wedler H."/>
            <person name="Wambutt R."/>
            <person name="Purnelle B."/>
            <person name="Goffeau A."/>
            <person name="Cadieu E."/>
            <person name="Dreano S."/>
            <person name="Gloux S."/>
            <person name="Lelaure V."/>
            <person name="Mottier S."/>
            <person name="Galibert F."/>
            <person name="Aves S.J."/>
            <person name="Xiang Z."/>
            <person name="Hunt C."/>
            <person name="Moore K."/>
            <person name="Hurst S.M."/>
            <person name="Lucas M."/>
            <person name="Rochet M."/>
            <person name="Gaillardin C."/>
            <person name="Tallada V.A."/>
            <person name="Garzon A."/>
            <person name="Thode G."/>
            <person name="Daga R.R."/>
            <person name="Cruzado L."/>
            <person name="Jimenez J."/>
            <person name="Sanchez M."/>
            <person name="del Rey F."/>
            <person name="Benito J."/>
            <person name="Dominguez A."/>
            <person name="Revuelta J.L."/>
            <person name="Moreno S."/>
            <person name="Armstrong J."/>
            <person name="Forsburg S.L."/>
            <person name="Cerutti L."/>
            <person name="Lowe T."/>
            <person name="McCombie W.R."/>
            <person name="Paulsen I."/>
            <person name="Potashkin J."/>
            <person name="Shpakovski G.V."/>
            <person name="Ussery D."/>
            <person name="Barrell B.G."/>
            <person name="Nurse P."/>
        </authorList>
    </citation>
    <scope>NUCLEOTIDE SEQUENCE [LARGE SCALE GENOMIC DNA]</scope>
    <source>
        <strain>972 / ATCC 24843</strain>
    </source>
</reference>
<reference key="2">
    <citation type="journal article" date="2000" name="J. Biol. Chem.">
        <title>Purification and characterization of RNA polymerase II holoenzyme from Schizosaccharomyces pombe.</title>
        <authorList>
            <person name="Spaehr H."/>
            <person name="Beve J."/>
            <person name="Larsson T."/>
            <person name="Bergstroem J."/>
            <person name="Karlsson K.-A."/>
            <person name="Gustafsson C.M."/>
        </authorList>
    </citation>
    <scope>IDENTIFICATION BY MASS SPECTROMETRY</scope>
    <scope>IDENTIFICATION IN THE MEDIATOR COMPLEX</scope>
    <source>
        <strain>972 / ATCC 24843</strain>
    </source>
</reference>
<evidence type="ECO:0000250" key="1"/>
<evidence type="ECO:0000269" key="2">
    <source>
    </source>
</evidence>
<evidence type="ECO:0000305" key="3"/>
<evidence type="ECO:0007829" key="4">
    <source>
        <dbReference type="PDB" id="5N9J"/>
    </source>
</evidence>
<proteinExistence type="evidence at protein level"/>
<sequence length="879" mass="100834">MEPPAIPHITEGFYPLPEIVETFSHHVLQELVSLAEVLPSMSNVEKKKKILDWLLRSRAFTMRLLVLARWVHLSPSVHRCIDVVAFLQGQKFCFQNLVHVLQDIRYQLSFARLRNSDLVTALDILSTGTSLRLANAPTSKLYMLSESPLSTKQILQTLHALNMLIRIRLSLYEIIPTPFQHFTIANGRCTFTVPNEFSVSLTTNSQDPKSTGISFQWIVVDFQFHLPDFSSTPAKYRVFIELHLNEEIAAAFVLQKPILPLIYNILHKFCLYQRLNLLSQQTFQLSRESWLGHLRGVYDEKPPRLRLYYWPQLNVKKEGKPGKIGHYIHIFVNTQPISAFERTLSSKRSSCEYDHFLLLVEWHHDGIVEHVPLDDHMDAQHLLLLITQKHAQLILEQIRKELHPNIFSEHVGGGLKIHVFDNEIIVKVNSVTGRLVLSSSASPLSPPRHLRAAEKNIALNTQPPAQILNRLYFFCIQTQLLEVAQCAELHAVQGYYSFPYLTFSKGKWRKDGDSLWVLAYNVESNSWSVRLLNAAGQTLYTQDVHTTKGTLSIESFSRLSYLLEVQILLFNVQTACQARGMPFEYLPIPPKALIEDDFTTYVQTGCLCIMMPSSNEDMLPVVFVRAHDGQLIFDSRIKGKLPYQSETETEKNCYIDWRTGRITIRVQNFSSFEKTWIGLLKLVALSKTSAFNVDCITLKHVDFTYLDDEKFRATIHDDNTFTLHFFNRHSPFHLISQFLQDTFSDGPSAIQPLRVIMDRTRGVLVAQELGYVVLARSLRQYRIILSKNHGIQVLLNRHGCILQDLSYLSADSRYLEGTQTLTSQWEPCSWLNTVWEGDLGDDELNGQIEAAPEMHLIKMNKTADLTAILKRILAISRKK</sequence>
<organism>
    <name type="scientific">Schizosaccharomyces pombe (strain 972 / ATCC 24843)</name>
    <name type="common">Fission yeast</name>
    <dbReference type="NCBI Taxonomy" id="284812"/>
    <lineage>
        <taxon>Eukaryota</taxon>
        <taxon>Fungi</taxon>
        <taxon>Dikarya</taxon>
        <taxon>Ascomycota</taxon>
        <taxon>Taphrinomycotina</taxon>
        <taxon>Schizosaccharomycetes</taxon>
        <taxon>Schizosaccharomycetales</taxon>
        <taxon>Schizosaccharomycetaceae</taxon>
        <taxon>Schizosaccharomyces</taxon>
    </lineage>
</organism>